<name>HSCB_ECOL6</name>
<keyword id="KW-0143">Chaperone</keyword>
<keyword id="KW-1185">Reference proteome</keyword>
<sequence length="171" mass="20138">MDYFTLFGLPARYQLDTQALSLRFQDLQRQYHPDKFASGSQAEQLAAVQQSATINQAWQTLRHPLMRAEYLLSLHGFDLASEQHTVRDTAFLMEQLELREELDEIEQAKDEARLESFIKRVKKMFDTRHQLMVEQLDNETWDAAADTVRKLRFLDKLRSSAEQLEEKLLDF</sequence>
<proteinExistence type="inferred from homology"/>
<organism>
    <name type="scientific">Escherichia coli O6:H1 (strain CFT073 / ATCC 700928 / UPEC)</name>
    <dbReference type="NCBI Taxonomy" id="199310"/>
    <lineage>
        <taxon>Bacteria</taxon>
        <taxon>Pseudomonadati</taxon>
        <taxon>Pseudomonadota</taxon>
        <taxon>Gammaproteobacteria</taxon>
        <taxon>Enterobacterales</taxon>
        <taxon>Enterobacteriaceae</taxon>
        <taxon>Escherichia</taxon>
    </lineage>
</organism>
<feature type="chain" id="PRO_0000070967" description="Co-chaperone protein HscB">
    <location>
        <begin position="1"/>
        <end position="171"/>
    </location>
</feature>
<feature type="domain" description="J">
    <location>
        <begin position="2"/>
        <end position="74"/>
    </location>
</feature>
<comment type="function">
    <text evidence="1">Co-chaperone involved in the maturation of iron-sulfur cluster-containing proteins. Seems to help targeting proteins to be folded toward HscA (By similarity).</text>
</comment>
<comment type="subunit">
    <text evidence="1">Interacts with HscA and stimulates its ATPase activity. Interacts with IscU (By similarity).</text>
</comment>
<comment type="similarity">
    <text evidence="2">Belongs to the HscB family.</text>
</comment>
<reference key="1">
    <citation type="journal article" date="2002" name="Proc. Natl. Acad. Sci. U.S.A.">
        <title>Extensive mosaic structure revealed by the complete genome sequence of uropathogenic Escherichia coli.</title>
        <authorList>
            <person name="Welch R.A."/>
            <person name="Burland V."/>
            <person name="Plunkett G. III"/>
            <person name="Redford P."/>
            <person name="Roesch P."/>
            <person name="Rasko D."/>
            <person name="Buckles E.L."/>
            <person name="Liou S.-R."/>
            <person name="Boutin A."/>
            <person name="Hackett J."/>
            <person name="Stroud D."/>
            <person name="Mayhew G.F."/>
            <person name="Rose D.J."/>
            <person name="Zhou S."/>
            <person name="Schwartz D.C."/>
            <person name="Perna N.T."/>
            <person name="Mobley H.L.T."/>
            <person name="Donnenberg M.S."/>
            <person name="Blattner F.R."/>
        </authorList>
    </citation>
    <scope>NUCLEOTIDE SEQUENCE [LARGE SCALE GENOMIC DNA]</scope>
    <source>
        <strain>CFT073 / ATCC 700928 / UPEC</strain>
    </source>
</reference>
<gene>
    <name type="primary">hscB</name>
    <name type="ordered locus">c3052</name>
</gene>
<protein>
    <recommendedName>
        <fullName>Co-chaperone protein HscB</fullName>
    </recommendedName>
    <alternativeName>
        <fullName>Hsc20</fullName>
    </alternativeName>
</protein>
<dbReference type="EMBL" id="AE014075">
    <property type="protein sequence ID" value="AAN81502.1"/>
    <property type="molecule type" value="Genomic_DNA"/>
</dbReference>
<dbReference type="RefSeq" id="WP_000384413.1">
    <property type="nucleotide sequence ID" value="NZ_CP051263.1"/>
</dbReference>
<dbReference type="SMR" id="P0A6M0"/>
<dbReference type="STRING" id="199310.c3052"/>
<dbReference type="GeneID" id="75172640"/>
<dbReference type="KEGG" id="ecc:c3052"/>
<dbReference type="eggNOG" id="COG1076">
    <property type="taxonomic scope" value="Bacteria"/>
</dbReference>
<dbReference type="HOGENOM" id="CLU_068529_2_0_6"/>
<dbReference type="BioCyc" id="ECOL199310:C3052-MONOMER"/>
<dbReference type="Proteomes" id="UP000001410">
    <property type="component" value="Chromosome"/>
</dbReference>
<dbReference type="GO" id="GO:1990230">
    <property type="term" value="C:iron-sulfur cluster transfer complex"/>
    <property type="evidence" value="ECO:0007669"/>
    <property type="project" value="TreeGrafter"/>
</dbReference>
<dbReference type="GO" id="GO:0001671">
    <property type="term" value="F:ATPase activator activity"/>
    <property type="evidence" value="ECO:0007669"/>
    <property type="project" value="InterPro"/>
</dbReference>
<dbReference type="GO" id="GO:0051087">
    <property type="term" value="F:protein-folding chaperone binding"/>
    <property type="evidence" value="ECO:0007669"/>
    <property type="project" value="InterPro"/>
</dbReference>
<dbReference type="GO" id="GO:0044571">
    <property type="term" value="P:[2Fe-2S] cluster assembly"/>
    <property type="evidence" value="ECO:0007669"/>
    <property type="project" value="InterPro"/>
</dbReference>
<dbReference type="GO" id="GO:0051259">
    <property type="term" value="P:protein complex oligomerization"/>
    <property type="evidence" value="ECO:0007669"/>
    <property type="project" value="InterPro"/>
</dbReference>
<dbReference type="GO" id="GO:0006457">
    <property type="term" value="P:protein folding"/>
    <property type="evidence" value="ECO:0007669"/>
    <property type="project" value="UniProtKB-UniRule"/>
</dbReference>
<dbReference type="CDD" id="cd06257">
    <property type="entry name" value="DnaJ"/>
    <property type="match status" value="1"/>
</dbReference>
<dbReference type="FunFam" id="1.10.287.110:FF:000008">
    <property type="entry name" value="Co-chaperone protein HscB"/>
    <property type="match status" value="1"/>
</dbReference>
<dbReference type="FunFam" id="1.20.1280.20:FF:000001">
    <property type="entry name" value="Co-chaperone protein HscB"/>
    <property type="match status" value="1"/>
</dbReference>
<dbReference type="Gene3D" id="1.10.287.110">
    <property type="entry name" value="DnaJ domain"/>
    <property type="match status" value="1"/>
</dbReference>
<dbReference type="Gene3D" id="1.20.1280.20">
    <property type="entry name" value="HscB, C-terminal domain"/>
    <property type="match status" value="1"/>
</dbReference>
<dbReference type="HAMAP" id="MF_00682">
    <property type="entry name" value="HscB"/>
    <property type="match status" value="1"/>
</dbReference>
<dbReference type="InterPro" id="IPR001623">
    <property type="entry name" value="DnaJ_domain"/>
</dbReference>
<dbReference type="InterPro" id="IPR004640">
    <property type="entry name" value="HscB"/>
</dbReference>
<dbReference type="InterPro" id="IPR036386">
    <property type="entry name" value="HscB_C_sf"/>
</dbReference>
<dbReference type="InterPro" id="IPR009073">
    <property type="entry name" value="HscB_oligo_C"/>
</dbReference>
<dbReference type="InterPro" id="IPR036869">
    <property type="entry name" value="J_dom_sf"/>
</dbReference>
<dbReference type="NCBIfam" id="TIGR00714">
    <property type="entry name" value="hscB"/>
    <property type="match status" value="1"/>
</dbReference>
<dbReference type="NCBIfam" id="NF003449">
    <property type="entry name" value="PRK05014.1"/>
    <property type="match status" value="1"/>
</dbReference>
<dbReference type="PANTHER" id="PTHR14021">
    <property type="entry name" value="IRON-SULFUR CLUSTER CO-CHAPERONE PROTEIN HSCB"/>
    <property type="match status" value="1"/>
</dbReference>
<dbReference type="PANTHER" id="PTHR14021:SF15">
    <property type="entry name" value="IRON-SULFUR CLUSTER CO-CHAPERONE PROTEIN HSCB"/>
    <property type="match status" value="1"/>
</dbReference>
<dbReference type="Pfam" id="PF07743">
    <property type="entry name" value="HSCB_C"/>
    <property type="match status" value="1"/>
</dbReference>
<dbReference type="SMART" id="SM00271">
    <property type="entry name" value="DnaJ"/>
    <property type="match status" value="1"/>
</dbReference>
<dbReference type="SUPFAM" id="SSF46565">
    <property type="entry name" value="Chaperone J-domain"/>
    <property type="match status" value="1"/>
</dbReference>
<dbReference type="SUPFAM" id="SSF47144">
    <property type="entry name" value="HSC20 (HSCB), C-terminal oligomerisation domain"/>
    <property type="match status" value="1"/>
</dbReference>
<dbReference type="PROSITE" id="PS50076">
    <property type="entry name" value="DNAJ_2"/>
    <property type="match status" value="1"/>
</dbReference>
<evidence type="ECO:0000250" key="1"/>
<evidence type="ECO:0000305" key="2"/>
<accession>P0A6M0</accession>
<accession>P36540</accession>